<keyword id="KW-1185">Reference proteome</keyword>
<keyword id="KW-0677">Repeat</keyword>
<keyword id="KW-0853">WD repeat</keyword>
<organism>
    <name type="scientific">Caenorhabditis elegans</name>
    <dbReference type="NCBI Taxonomy" id="6239"/>
    <lineage>
        <taxon>Eukaryota</taxon>
        <taxon>Metazoa</taxon>
        <taxon>Ecdysozoa</taxon>
        <taxon>Nematoda</taxon>
        <taxon>Chromadorea</taxon>
        <taxon>Rhabditida</taxon>
        <taxon>Rhabditina</taxon>
        <taxon>Rhabditomorpha</taxon>
        <taxon>Rhabditoidea</taxon>
        <taxon>Rhabditidae</taxon>
        <taxon>Peloderinae</taxon>
        <taxon>Caenorhabditis</taxon>
    </lineage>
</organism>
<evidence type="ECO:0000256" key="1">
    <source>
        <dbReference type="SAM" id="MobiDB-lite"/>
    </source>
</evidence>
<evidence type="ECO:0000269" key="2">
    <source>
    </source>
</evidence>
<evidence type="ECO:0000269" key="3">
    <source>
    </source>
</evidence>
<evidence type="ECO:0000305" key="4"/>
<protein>
    <recommendedName>
        <fullName>WD repeat-containing protein wdr-5.3</fullName>
    </recommendedName>
</protein>
<reference key="1">
    <citation type="journal article" date="1998" name="Science">
        <title>Genome sequence of the nematode C. elegans: a platform for investigating biology.</title>
        <authorList>
            <consortium name="The C. elegans sequencing consortium"/>
        </authorList>
    </citation>
    <scope>NUCLEOTIDE SEQUENCE [LARGE SCALE GENOMIC DNA]</scope>
    <source>
        <strain>Bristol N2</strain>
    </source>
</reference>
<reference key="2">
    <citation type="journal article" date="2011" name="PLoS Genet.">
        <title>A role for Set1/MLL-related components in epigenetic regulation of the Caenorhabditis elegans germ line.</title>
        <authorList>
            <person name="Li T."/>
            <person name="Kelly W.G."/>
        </authorList>
    </citation>
    <scope>FUNCTION</scope>
</reference>
<reference key="3">
    <citation type="journal article" date="2014" name="Nucleic Acids Res.">
        <title>A role for WDR5 in TRA-1/Gli mediated transcriptional control of the sperm/oocyte switch in C. elegans.</title>
        <authorList>
            <person name="Li T."/>
            <person name="Kelly W.G."/>
        </authorList>
    </citation>
    <scope>FUNCTION</scope>
    <scope>DISRUPTION PHENOTYPE</scope>
</reference>
<gene>
    <name type="primary">wdr-5.3</name>
    <name type="synonym">swd-3.3</name>
    <name type="ORF">ZC302.2</name>
</gene>
<comment type="function">
    <text evidence="2 3">Not required for methylation of histone H3 'Lys-4'.</text>
</comment>
<comment type="disruption phenotype">
    <text evidence="3">RNAi-mediated knockdown does not result in detectable defects in histone H3 'Lys-4' di- or tri-methylation in embryos or adults germ cells at 20 or 25 degrees Celsius.</text>
</comment>
<comment type="similarity">
    <text evidence="4">Belongs to the WD repeat WDR5/wds family.</text>
</comment>
<feature type="chain" id="PRO_0000051502" description="WD repeat-containing protein wdr-5.3">
    <location>
        <begin position="1"/>
        <end position="501"/>
    </location>
</feature>
<feature type="repeat" description="WD 1">
    <location>
        <begin position="211"/>
        <end position="241"/>
    </location>
</feature>
<feature type="repeat" description="WD 2">
    <location>
        <begin position="253"/>
        <end position="283"/>
    </location>
</feature>
<feature type="repeat" description="WD 3">
    <location>
        <begin position="295"/>
        <end position="325"/>
    </location>
</feature>
<feature type="repeat" description="WD 4">
    <location>
        <begin position="337"/>
        <end position="367"/>
    </location>
</feature>
<feature type="repeat" description="WD 5">
    <location>
        <begin position="381"/>
        <end position="410"/>
    </location>
</feature>
<feature type="repeat" description="WD 6">
    <location>
        <begin position="422"/>
        <end position="455"/>
    </location>
</feature>
<feature type="repeat" description="WD 7">
    <location>
        <begin position="467"/>
        <end position="499"/>
    </location>
</feature>
<feature type="region of interest" description="Disordered" evidence="1">
    <location>
        <begin position="1"/>
        <end position="35"/>
    </location>
</feature>
<feature type="region of interest" description="Disordered" evidence="1">
    <location>
        <begin position="58"/>
        <end position="85"/>
    </location>
</feature>
<feature type="region of interest" description="Disordered" evidence="1">
    <location>
        <begin position="155"/>
        <end position="197"/>
    </location>
</feature>
<feature type="compositionally biased region" description="Polar residues" evidence="1">
    <location>
        <begin position="22"/>
        <end position="35"/>
    </location>
</feature>
<feature type="compositionally biased region" description="Polar residues" evidence="1">
    <location>
        <begin position="167"/>
        <end position="177"/>
    </location>
</feature>
<dbReference type="EMBL" id="Z73978">
    <property type="protein sequence ID" value="CAA98293.1"/>
    <property type="molecule type" value="Genomic_DNA"/>
</dbReference>
<dbReference type="PIR" id="T27513">
    <property type="entry name" value="T27513"/>
</dbReference>
<dbReference type="RefSeq" id="NP_001024299.1">
    <property type="nucleotide sequence ID" value="NM_001029128.4"/>
</dbReference>
<dbReference type="SMR" id="Q23256"/>
<dbReference type="BioGRID" id="44518">
    <property type="interactions" value="3"/>
</dbReference>
<dbReference type="FunCoup" id="Q23256">
    <property type="interactions" value="1499"/>
</dbReference>
<dbReference type="STRING" id="6239.ZC302.2a.1"/>
<dbReference type="PaxDb" id="6239-ZC302.2a"/>
<dbReference type="PeptideAtlas" id="Q23256"/>
<dbReference type="EnsemblMetazoa" id="ZC302.2a.1">
    <property type="protein sequence ID" value="ZC302.2a.1"/>
    <property type="gene ID" value="WBGene00013862"/>
</dbReference>
<dbReference type="GeneID" id="179489"/>
<dbReference type="KEGG" id="cel:CELE_ZC302.2"/>
<dbReference type="UCSC" id="ZC302.2a">
    <property type="organism name" value="c. elegans"/>
</dbReference>
<dbReference type="AGR" id="WB:WBGene00013862"/>
<dbReference type="CTD" id="179489"/>
<dbReference type="WormBase" id="ZC302.2a">
    <property type="protein sequence ID" value="CE06574"/>
    <property type="gene ID" value="WBGene00013862"/>
    <property type="gene designation" value="wdr-5.3"/>
</dbReference>
<dbReference type="eggNOG" id="KOG0266">
    <property type="taxonomic scope" value="Eukaryota"/>
</dbReference>
<dbReference type="GeneTree" id="ENSGT00970000196638"/>
<dbReference type="HOGENOM" id="CLU_000288_57_1_1"/>
<dbReference type="InParanoid" id="Q23256"/>
<dbReference type="OrthoDB" id="674604at2759"/>
<dbReference type="PhylomeDB" id="Q23256"/>
<dbReference type="PRO" id="PR:Q23256"/>
<dbReference type="Proteomes" id="UP000001940">
    <property type="component" value="Chromosome V"/>
</dbReference>
<dbReference type="Bgee" id="WBGene00013862">
    <property type="expression patterns" value="Expressed in germ line (C elegans) and 4 other cell types or tissues"/>
</dbReference>
<dbReference type="GO" id="GO:1904115">
    <property type="term" value="C:axon cytoplasm"/>
    <property type="evidence" value="ECO:0007669"/>
    <property type="project" value="GOC"/>
</dbReference>
<dbReference type="GO" id="GO:0005881">
    <property type="term" value="C:cytoplasmic microtubule"/>
    <property type="evidence" value="ECO:0000318"/>
    <property type="project" value="GO_Central"/>
</dbReference>
<dbReference type="GO" id="GO:0000776">
    <property type="term" value="C:kinetochore"/>
    <property type="evidence" value="ECO:0000318"/>
    <property type="project" value="GO_Central"/>
</dbReference>
<dbReference type="GO" id="GO:0005875">
    <property type="term" value="C:microtubule associated complex"/>
    <property type="evidence" value="ECO:0000318"/>
    <property type="project" value="GO_Central"/>
</dbReference>
<dbReference type="GO" id="GO:0044666">
    <property type="term" value="C:MLL3/4 complex"/>
    <property type="evidence" value="ECO:0000314"/>
    <property type="project" value="WormBase"/>
</dbReference>
<dbReference type="GO" id="GO:0043005">
    <property type="term" value="C:neuron projection"/>
    <property type="evidence" value="ECO:0000318"/>
    <property type="project" value="GO_Central"/>
</dbReference>
<dbReference type="GO" id="GO:0043025">
    <property type="term" value="C:neuronal cell body"/>
    <property type="evidence" value="ECO:0000318"/>
    <property type="project" value="GO_Central"/>
</dbReference>
<dbReference type="GO" id="GO:0005635">
    <property type="term" value="C:nuclear envelope"/>
    <property type="evidence" value="ECO:0000318"/>
    <property type="project" value="GO_Central"/>
</dbReference>
<dbReference type="GO" id="GO:0070840">
    <property type="term" value="F:dynein complex binding"/>
    <property type="evidence" value="ECO:0000318"/>
    <property type="project" value="GO_Central"/>
</dbReference>
<dbReference type="GO" id="GO:0051010">
    <property type="term" value="F:microtubule plus-end binding"/>
    <property type="evidence" value="ECO:0000318"/>
    <property type="project" value="GO_Central"/>
</dbReference>
<dbReference type="GO" id="GO:0048854">
    <property type="term" value="P:brain morphogenesis"/>
    <property type="evidence" value="ECO:0000318"/>
    <property type="project" value="GO_Central"/>
</dbReference>
<dbReference type="GO" id="GO:0000132">
    <property type="term" value="P:establishment of mitotic spindle orientation"/>
    <property type="evidence" value="ECO:0000318"/>
    <property type="project" value="GO_Central"/>
</dbReference>
<dbReference type="GO" id="GO:0007281">
    <property type="term" value="P:germ cell development"/>
    <property type="evidence" value="ECO:0000318"/>
    <property type="project" value="GO_Central"/>
</dbReference>
<dbReference type="GO" id="GO:0031023">
    <property type="term" value="P:microtubule organizing center organization"/>
    <property type="evidence" value="ECO:0000318"/>
    <property type="project" value="GO_Central"/>
</dbReference>
<dbReference type="GO" id="GO:0007097">
    <property type="term" value="P:nuclear migration"/>
    <property type="evidence" value="ECO:0000318"/>
    <property type="project" value="GO_Central"/>
</dbReference>
<dbReference type="GO" id="GO:0008090">
    <property type="term" value="P:retrograde axonal transport"/>
    <property type="evidence" value="ECO:0000318"/>
    <property type="project" value="GO_Central"/>
</dbReference>
<dbReference type="GO" id="GO:0047496">
    <property type="term" value="P:vesicle transport along microtubule"/>
    <property type="evidence" value="ECO:0000318"/>
    <property type="project" value="GO_Central"/>
</dbReference>
<dbReference type="CDD" id="cd00200">
    <property type="entry name" value="WD40"/>
    <property type="match status" value="1"/>
</dbReference>
<dbReference type="FunFam" id="2.130.10.10:FF:000228">
    <property type="entry name" value="COMPASS-like H3K4 histone methylase component WDR5A"/>
    <property type="match status" value="1"/>
</dbReference>
<dbReference type="Gene3D" id="2.130.10.10">
    <property type="entry name" value="YVTN repeat-like/Quinoprotein amine dehydrogenase"/>
    <property type="match status" value="1"/>
</dbReference>
<dbReference type="InterPro" id="IPR020472">
    <property type="entry name" value="G-protein_beta_WD-40_rep"/>
</dbReference>
<dbReference type="InterPro" id="IPR015943">
    <property type="entry name" value="WD40/YVTN_repeat-like_dom_sf"/>
</dbReference>
<dbReference type="InterPro" id="IPR019775">
    <property type="entry name" value="WD40_repeat_CS"/>
</dbReference>
<dbReference type="InterPro" id="IPR036322">
    <property type="entry name" value="WD40_repeat_dom_sf"/>
</dbReference>
<dbReference type="InterPro" id="IPR001680">
    <property type="entry name" value="WD40_rpt"/>
</dbReference>
<dbReference type="PANTHER" id="PTHR22847:SF637">
    <property type="entry name" value="WD REPEAT DOMAIN 5B"/>
    <property type="match status" value="1"/>
</dbReference>
<dbReference type="PANTHER" id="PTHR22847">
    <property type="entry name" value="WD40 REPEAT PROTEIN"/>
    <property type="match status" value="1"/>
</dbReference>
<dbReference type="Pfam" id="PF25175">
    <property type="entry name" value="Beta-prop_WDR5"/>
    <property type="match status" value="1"/>
</dbReference>
<dbReference type="PRINTS" id="PR00320">
    <property type="entry name" value="GPROTEINBRPT"/>
</dbReference>
<dbReference type="SMART" id="SM00320">
    <property type="entry name" value="WD40"/>
    <property type="match status" value="7"/>
</dbReference>
<dbReference type="SUPFAM" id="SSF50978">
    <property type="entry name" value="WD40 repeat-like"/>
    <property type="match status" value="1"/>
</dbReference>
<dbReference type="PROSITE" id="PS00678">
    <property type="entry name" value="WD_REPEATS_1"/>
    <property type="match status" value="3"/>
</dbReference>
<dbReference type="PROSITE" id="PS50082">
    <property type="entry name" value="WD_REPEATS_2"/>
    <property type="match status" value="6"/>
</dbReference>
<dbReference type="PROSITE" id="PS50294">
    <property type="entry name" value="WD_REPEATS_REGION"/>
    <property type="match status" value="1"/>
</dbReference>
<sequence>MNPERQETISPKNVPFQPVPTPNQQSLQSRMLESNQAVPDAFQKVAAWNHYNAVATPPIGVPQTARPPSNQSPHPNPPGYPYQSHQQQFHPLAIAFQQPFGLPQQVIYPPPPPGFTPHRVQVSPVGLLGPPGFFPQFAGSTTSQGNPSEVSVRTKSAEGTTGPIAPSITTKPTSTIQVAPPRDPVAPTTSSSGITKKPENGEFSLVKTISGHTKSVSVIKFSYCGKYLGTGSADKQIKVWNTVDMTYLQTLASHQLGINDFSWSSNSQFIASASDDTTVKIFDVISGACLRTMRGHTNYVFCCSFNPQSSLIASAGFDETVRVWDFKTGLCVKCIPAHSDPITSISYNHDGNTMATSSYDGCIRVWDAASGSCLKTLVDTDHAPVTFVCFSPNGKYLLSAQLDSSLKLWDPKKAKPLKYYNGHKNKKYCLFANMSVPLGKHIISGSEDGRILVWSIQTKQIVQILEGHTTPVLATDSHPTLNIIASGGLEPDNVIRIWRRN</sequence>
<proteinExistence type="inferred from homology"/>
<name>WDR53_CAEEL</name>
<accession>Q23256</accession>